<evidence type="ECO:0000269" key="1">
    <source>
    </source>
</evidence>
<evidence type="ECO:0000269" key="2">
    <source>
    </source>
</evidence>
<evidence type="ECO:0000269" key="3">
    <source>
    </source>
</evidence>
<evidence type="ECO:0000303" key="4">
    <source>
    </source>
</evidence>
<evidence type="ECO:0000303" key="5">
    <source>
    </source>
</evidence>
<evidence type="ECO:0000305" key="6"/>
<evidence type="ECO:0000305" key="7">
    <source>
    </source>
</evidence>
<gene>
    <name evidence="4" type="primary">wbdB</name>
    <name evidence="5" type="synonym">mtfB</name>
</gene>
<dbReference type="EC" id="2.4.1.349" evidence="1 7"/>
<dbReference type="EMBL" id="D43637">
    <property type="protein sequence ID" value="BAA07751.1"/>
    <property type="molecule type" value="Genomic_DNA"/>
</dbReference>
<dbReference type="PIR" id="I76776">
    <property type="entry name" value="I76776"/>
</dbReference>
<dbReference type="RefSeq" id="WP_039268422.1">
    <property type="nucleotide sequence ID" value="NZ_WAIW01000029.1"/>
</dbReference>
<dbReference type="SMR" id="Q47594"/>
<dbReference type="CAZy" id="GT4">
    <property type="family name" value="Glycosyltransferase Family 4"/>
</dbReference>
<dbReference type="BioCyc" id="MetaCyc:MONOMER-21642"/>
<dbReference type="UniPathway" id="UPA00281"/>
<dbReference type="GO" id="GO:0016757">
    <property type="term" value="F:glycosyltransferase activity"/>
    <property type="evidence" value="ECO:0007669"/>
    <property type="project" value="UniProtKB-KW"/>
</dbReference>
<dbReference type="GO" id="GO:0009243">
    <property type="term" value="P:O antigen biosynthetic process"/>
    <property type="evidence" value="ECO:0007669"/>
    <property type="project" value="UniProtKB-UniPathway"/>
</dbReference>
<dbReference type="CDD" id="cd03809">
    <property type="entry name" value="GT4_MtfB-like"/>
    <property type="match status" value="1"/>
</dbReference>
<dbReference type="FunFam" id="3.40.50.2000:FF:000119">
    <property type="entry name" value="Glycosyl transferase group 1"/>
    <property type="match status" value="1"/>
</dbReference>
<dbReference type="Gene3D" id="3.40.50.2000">
    <property type="entry name" value="Glycogen Phosphorylase B"/>
    <property type="match status" value="2"/>
</dbReference>
<dbReference type="InterPro" id="IPR001296">
    <property type="entry name" value="Glyco_trans_1"/>
</dbReference>
<dbReference type="PANTHER" id="PTHR46401">
    <property type="entry name" value="GLYCOSYLTRANSFERASE WBBK-RELATED"/>
    <property type="match status" value="1"/>
</dbReference>
<dbReference type="PANTHER" id="PTHR46401:SF2">
    <property type="entry name" value="GLYCOSYLTRANSFERASE WBBK-RELATED"/>
    <property type="match status" value="1"/>
</dbReference>
<dbReference type="Pfam" id="PF00534">
    <property type="entry name" value="Glycos_transf_1"/>
    <property type="match status" value="1"/>
</dbReference>
<dbReference type="SUPFAM" id="SSF53756">
    <property type="entry name" value="UDP-Glycosyltransferase/glycogen phosphorylase"/>
    <property type="match status" value="1"/>
</dbReference>
<sequence length="381" mass="43868">MKIIFATEPIKYPLTGIGRYSLELVKRLAVAREIEELKLFHGASFIDQIPQVENKSDSKASNHGRLLAFLRRQPLLIEAYRLLHPRRQAWALRDYKDYIYHGPNFYLPHRLERAVTTFHDISIFTCPEYHPKDRVRYMEKSLHESLDSAKLILTVSDFSRSEIIRLFNYPADRIVTTKLACSSDYIPRSPAECLPVLQKYQLAWQGYALYIGTMEPRKNIRGLLQAYQLLPMETRMRYPLILSGYRGWEDDVLWQLVERGTREGWIRYLGYVPDEDLPYLYAAARTFVYPSFYEGFGLPILEAMSCGVPVVCSNVTSLPEVVGDAGLVADPNDVDAISAHILQSLQDDSWREIATARGLAQAKQFSWENCTTQTINAYKLL</sequence>
<feature type="chain" id="PRO_0000459449" description="O-antigen chain mannosyltransferase B">
    <location>
        <begin position="1"/>
        <end position="381"/>
    </location>
</feature>
<feature type="mutagenesis site" description="Drastic reduction in activity." evidence="2">
    <original>E</original>
    <variation>A</variation>
    <location>
        <position position="294"/>
    </location>
</feature>
<feature type="mutagenesis site" description="No effect on activity." evidence="2">
    <original>E</original>
    <variation>A</variation>
    <location>
        <position position="302"/>
    </location>
</feature>
<name>WBDB_ECOLX</name>
<proteinExistence type="evidence at protein level"/>
<keyword id="KW-0328">Glycosyltransferase</keyword>
<keyword id="KW-0448">Lipopolysaccharide biosynthesis</keyword>
<keyword id="KW-0808">Transferase</keyword>
<accession>Q47594</accession>
<reference key="1">
    <citation type="journal article" date="1995" name="J. Bacteriol.">
        <title>Expression of the O9 polysaccharide of Escherichia coli: sequencing of the E. coli O9 rfb gene cluster, characterization of mannosyl transferases, and evidence for an ATP-binding cassette transport system.</title>
        <authorList>
            <person name="Kido N."/>
            <person name="Torgov V.I."/>
            <person name="Sugiyama T."/>
            <person name="Uchiya K."/>
            <person name="Sugihara H."/>
            <person name="Komatsu T."/>
            <person name="Kato N."/>
            <person name="Jann K."/>
        </authorList>
    </citation>
    <scope>NUCLEOTIDE SEQUENCE [GENOMIC DNA]</scope>
    <scope>FUNCTION</scope>
    <scope>PATHWAY</scope>
    <source>
        <strain>O9a:K31-:H- / F719</strain>
    </source>
</reference>
<reference key="2">
    <citation type="journal article" date="2012" name="J. Biol. Chem.">
        <title>Biosynthesis of the polymannose lipopolysaccharide O-antigens from Escherichia coli serotypes O8 and O9a requires a unique combination of single- and multiple-active site mannosyltransferases.</title>
        <authorList>
            <person name="Greenfield L.K."/>
            <person name="Richards M.R."/>
            <person name="Li J."/>
            <person name="Wakarchuk W.W."/>
            <person name="Lowary T.L."/>
            <person name="Whitfield C."/>
        </authorList>
    </citation>
    <scope>FUNCTION</scope>
    <scope>CATALYTIC ACTIVITY</scope>
    <scope>PATHWAY</scope>
    <source>
        <strain>O9a</strain>
    </source>
</reference>
<reference key="3">
    <citation type="journal article" date="2012" name="J. Biol. Chem.">
        <title>Domain organization of the polymerizing mannosyltransferases involved in synthesis of the Escherichia coli O8 and O9a lipopolysaccharide O-antigens.</title>
        <authorList>
            <person name="Greenfield L.K."/>
            <person name="Richards M.R."/>
            <person name="Vinogradov E."/>
            <person name="Wakarchuk W.W."/>
            <person name="Lowary T.L."/>
            <person name="Whitfield C."/>
        </authorList>
    </citation>
    <scope>FUNCTION</scope>
    <scope>PATHWAY</scope>
    <scope>MUTAGENESIS OF GLU-294 AND GLU-302</scope>
    <source>
        <strain>O9a</strain>
    </source>
</reference>
<protein>
    <recommendedName>
        <fullName evidence="6">O-antigen chain mannosyltransferase B</fullName>
        <ecNumber evidence="1 7">2.4.1.349</ecNumber>
    </recommendedName>
    <alternativeName>
        <fullName evidence="6">Mannosyl-N-acetyl-alpha-D-glucosaminyl-diphospho-ditrans,octacis-undecaprenol 3-alpha-mannosyltransferase</fullName>
    </alternativeName>
</protein>
<organism>
    <name type="scientific">Escherichia coli</name>
    <dbReference type="NCBI Taxonomy" id="562"/>
    <lineage>
        <taxon>Bacteria</taxon>
        <taxon>Pseudomonadati</taxon>
        <taxon>Pseudomonadota</taxon>
        <taxon>Gammaproteobacteria</taxon>
        <taxon>Enterobacterales</taxon>
        <taxon>Enterobacteriaceae</taxon>
        <taxon>Escherichia</taxon>
    </lineage>
</organism>
<comment type="function">
    <text evidence="1 2 3">Mannosyltransferase involved in the biosynthesis of the repeat unit of the lipopolysaccharide (LPS) O-antigen region (PubMed:22875852, PubMed:22989876, PubMed:7536735). Catalyzes the transfer of two alpha-(1-&gt;3)-linked mannose residues to the product of the WbdC enzyme during the synthesis of the adapter region (PubMed:22875852).</text>
</comment>
<comment type="catalytic activity">
    <reaction evidence="1 7">
        <text>alpha-D-mannosyl-(1-&gt;3)-N-acetyl-alpha-D-glucosaminyl-di-trans,octa-cis-undecaprenyl diphosphate + 2 GDP-alpha-D-mannose = alpha-D-mannosyl-(1-&gt;3)-alpha-D-mannosyl-(1-&gt;3)-alpha-D-mannosyl-(1-&gt;3)-N-acetyl-alpha-D-glucosaminyl-di-trans,octa-cis-undecaprenyl diphosphate + 2 GDP + 2 H(+)</text>
        <dbReference type="Rhea" id="RHEA:53320"/>
        <dbReference type="ChEBI" id="CHEBI:15378"/>
        <dbReference type="ChEBI" id="CHEBI:57527"/>
        <dbReference type="ChEBI" id="CHEBI:58189"/>
        <dbReference type="ChEBI" id="CHEBI:137168"/>
        <dbReference type="ChEBI" id="CHEBI:137169"/>
        <dbReference type="EC" id="2.4.1.349"/>
    </reaction>
    <physiologicalReaction direction="left-to-right" evidence="1">
        <dbReference type="Rhea" id="RHEA:53321"/>
    </physiologicalReaction>
</comment>
<comment type="pathway">
    <text evidence="1 2 3">Bacterial outer membrane biogenesis; LPS O-antigen biosynthesis.</text>
</comment>
<comment type="similarity">
    <text evidence="6">Belongs to the glycosyltransferase group 1 family. Glycosyltransferase 4 subfamily.</text>
</comment>